<evidence type="ECO:0000255" key="1">
    <source>
        <dbReference type="HAMAP-Rule" id="MF_00009"/>
    </source>
</evidence>
<organism>
    <name type="scientific">Francisella tularensis subsp. tularensis (strain SCHU S4 / Schu 4)</name>
    <dbReference type="NCBI Taxonomy" id="177416"/>
    <lineage>
        <taxon>Bacteria</taxon>
        <taxon>Pseudomonadati</taxon>
        <taxon>Pseudomonadota</taxon>
        <taxon>Gammaproteobacteria</taxon>
        <taxon>Thiotrichales</taxon>
        <taxon>Francisellaceae</taxon>
        <taxon>Francisella</taxon>
    </lineage>
</organism>
<proteinExistence type="inferred from homology"/>
<comment type="function">
    <text evidence="1">Single strand-specific metallo-endoribonuclease involved in late-stage 70S ribosome quality control and in maturation of the 3' terminus of the 16S rRNA.</text>
</comment>
<comment type="cofactor">
    <cofactor evidence="1">
        <name>Zn(2+)</name>
        <dbReference type="ChEBI" id="CHEBI:29105"/>
    </cofactor>
    <text evidence="1">Binds 1 zinc ion.</text>
</comment>
<comment type="subcellular location">
    <subcellularLocation>
        <location evidence="1">Cytoplasm</location>
    </subcellularLocation>
</comment>
<comment type="similarity">
    <text evidence="1">Belongs to the endoribonuclease YbeY family.</text>
</comment>
<sequence length="168" mass="19426">MKRKLKMDNLNINFINDDEHPIPSQDLLLKCLQLVANKHHISHAEVNLNIVSNDEIQQINKQFRNKDKPTNIISFEFEKPQGLPDDIANDFLGDIVIAPAVLENEAKEQNKELNDHWQHIFIHGLLHLLGYDHQDDQEAEVMENLEIQLLAQLGIANPYIEQENQNGR</sequence>
<feature type="chain" id="PRO_0000102456" description="Endoribonuclease YbeY">
    <location>
        <begin position="1"/>
        <end position="168"/>
    </location>
</feature>
<feature type="binding site" evidence="1">
    <location>
        <position position="123"/>
    </location>
    <ligand>
        <name>Zn(2+)</name>
        <dbReference type="ChEBI" id="CHEBI:29105"/>
        <note>catalytic</note>
    </ligand>
</feature>
<feature type="binding site" evidence="1">
    <location>
        <position position="127"/>
    </location>
    <ligand>
        <name>Zn(2+)</name>
        <dbReference type="ChEBI" id="CHEBI:29105"/>
        <note>catalytic</note>
    </ligand>
</feature>
<feature type="binding site" evidence="1">
    <location>
        <position position="133"/>
    </location>
    <ligand>
        <name>Zn(2+)</name>
        <dbReference type="ChEBI" id="CHEBI:29105"/>
        <note>catalytic</note>
    </ligand>
</feature>
<dbReference type="EC" id="3.1.-.-" evidence="1"/>
<dbReference type="EMBL" id="AJ749949">
    <property type="protein sequence ID" value="CAG45249.1"/>
    <property type="molecule type" value="Genomic_DNA"/>
</dbReference>
<dbReference type="RefSeq" id="YP_169637.1">
    <property type="nucleotide sequence ID" value="NC_006570.2"/>
</dbReference>
<dbReference type="SMR" id="Q5NH55"/>
<dbReference type="STRING" id="177416.FTT_0616c"/>
<dbReference type="DNASU" id="3191147"/>
<dbReference type="EnsemblBacteria" id="CAG45249">
    <property type="protein sequence ID" value="CAG45249"/>
    <property type="gene ID" value="FTT_0616c"/>
</dbReference>
<dbReference type="KEGG" id="ftu:FTT_0616c"/>
<dbReference type="eggNOG" id="COG0319">
    <property type="taxonomic scope" value="Bacteria"/>
</dbReference>
<dbReference type="OrthoDB" id="9807740at2"/>
<dbReference type="Proteomes" id="UP000001174">
    <property type="component" value="Chromosome"/>
</dbReference>
<dbReference type="GO" id="GO:0005737">
    <property type="term" value="C:cytoplasm"/>
    <property type="evidence" value="ECO:0007669"/>
    <property type="project" value="UniProtKB-SubCell"/>
</dbReference>
<dbReference type="GO" id="GO:0004222">
    <property type="term" value="F:metalloendopeptidase activity"/>
    <property type="evidence" value="ECO:0007669"/>
    <property type="project" value="InterPro"/>
</dbReference>
<dbReference type="GO" id="GO:0004521">
    <property type="term" value="F:RNA endonuclease activity"/>
    <property type="evidence" value="ECO:0007669"/>
    <property type="project" value="UniProtKB-UniRule"/>
</dbReference>
<dbReference type="GO" id="GO:0008270">
    <property type="term" value="F:zinc ion binding"/>
    <property type="evidence" value="ECO:0007669"/>
    <property type="project" value="UniProtKB-UniRule"/>
</dbReference>
<dbReference type="GO" id="GO:0006364">
    <property type="term" value="P:rRNA processing"/>
    <property type="evidence" value="ECO:0007669"/>
    <property type="project" value="UniProtKB-UniRule"/>
</dbReference>
<dbReference type="Gene3D" id="3.40.390.30">
    <property type="entry name" value="Metalloproteases ('zincins'), catalytic domain"/>
    <property type="match status" value="1"/>
</dbReference>
<dbReference type="HAMAP" id="MF_00009">
    <property type="entry name" value="Endoribonucl_YbeY"/>
    <property type="match status" value="1"/>
</dbReference>
<dbReference type="InterPro" id="IPR023091">
    <property type="entry name" value="MetalPrtase_cat_dom_sf_prd"/>
</dbReference>
<dbReference type="InterPro" id="IPR002036">
    <property type="entry name" value="YbeY"/>
</dbReference>
<dbReference type="InterPro" id="IPR020549">
    <property type="entry name" value="YbeY_CS"/>
</dbReference>
<dbReference type="NCBIfam" id="TIGR00043">
    <property type="entry name" value="rRNA maturation RNase YbeY"/>
    <property type="match status" value="1"/>
</dbReference>
<dbReference type="PANTHER" id="PTHR46986">
    <property type="entry name" value="ENDORIBONUCLEASE YBEY, CHLOROPLASTIC"/>
    <property type="match status" value="1"/>
</dbReference>
<dbReference type="PANTHER" id="PTHR46986:SF1">
    <property type="entry name" value="ENDORIBONUCLEASE YBEY, CHLOROPLASTIC"/>
    <property type="match status" value="1"/>
</dbReference>
<dbReference type="Pfam" id="PF02130">
    <property type="entry name" value="YbeY"/>
    <property type="match status" value="1"/>
</dbReference>
<dbReference type="SUPFAM" id="SSF55486">
    <property type="entry name" value="Metalloproteases ('zincins'), catalytic domain"/>
    <property type="match status" value="1"/>
</dbReference>
<dbReference type="PROSITE" id="PS01306">
    <property type="entry name" value="UPF0054"/>
    <property type="match status" value="1"/>
</dbReference>
<name>YBEY_FRATT</name>
<gene>
    <name evidence="1" type="primary">ybeY</name>
    <name type="ordered locus">FTT_0616c</name>
</gene>
<protein>
    <recommendedName>
        <fullName evidence="1">Endoribonuclease YbeY</fullName>
        <ecNumber evidence="1">3.1.-.-</ecNumber>
    </recommendedName>
</protein>
<accession>Q5NH55</accession>
<reference key="1">
    <citation type="journal article" date="2005" name="Nat. Genet.">
        <title>The complete genome sequence of Francisella tularensis, the causative agent of tularemia.</title>
        <authorList>
            <person name="Larsson P."/>
            <person name="Oyston P.C.F."/>
            <person name="Chain P."/>
            <person name="Chu M.C."/>
            <person name="Duffield M."/>
            <person name="Fuxelius H.-H."/>
            <person name="Garcia E."/>
            <person name="Haelltorp G."/>
            <person name="Johansson D."/>
            <person name="Isherwood K.E."/>
            <person name="Karp P.D."/>
            <person name="Larsson E."/>
            <person name="Liu Y."/>
            <person name="Michell S."/>
            <person name="Prior J."/>
            <person name="Prior R."/>
            <person name="Malfatti S."/>
            <person name="Sjoestedt A."/>
            <person name="Svensson K."/>
            <person name="Thompson N."/>
            <person name="Vergez L."/>
            <person name="Wagg J.K."/>
            <person name="Wren B.W."/>
            <person name="Lindler L.E."/>
            <person name="Andersson S.G.E."/>
            <person name="Forsman M."/>
            <person name="Titball R.W."/>
        </authorList>
    </citation>
    <scope>NUCLEOTIDE SEQUENCE [LARGE SCALE GENOMIC DNA]</scope>
    <source>
        <strain>SCHU S4 / Schu 4</strain>
    </source>
</reference>
<keyword id="KW-0963">Cytoplasm</keyword>
<keyword id="KW-0255">Endonuclease</keyword>
<keyword id="KW-0378">Hydrolase</keyword>
<keyword id="KW-0479">Metal-binding</keyword>
<keyword id="KW-0540">Nuclease</keyword>
<keyword id="KW-1185">Reference proteome</keyword>
<keyword id="KW-0690">Ribosome biogenesis</keyword>
<keyword id="KW-0698">rRNA processing</keyword>
<keyword id="KW-0862">Zinc</keyword>